<name>PHY_PICAB</name>
<proteinExistence type="evidence at transcript level"/>
<comment type="function">
    <text>Regulatory photoreceptor which exists in two forms that are reversibly interconvertible by light: the Pr form that absorbs maximally in the red region of the spectrum and the Pfr form that absorbs maximally in the far-red region. Photoconversion of Pr to Pfr induces an array of morphogenic responses, whereas reconversion of Pfr to Pr cancels the induction of those responses. Pfr controls the expression of a number of nuclear genes including those encoding the small subunit of ribulose-bisphosphate carboxylase, chlorophyll A/B binding protein, protochlorophyllide reductase, rRNA, etc. It also controls the expression of its own gene(s) in a negative feedback fashion.</text>
</comment>
<comment type="subunit">
    <text evidence="1">Homodimer.</text>
</comment>
<comment type="PTM">
    <text evidence="1">Contains one covalently linked phytochromobilin chromophore.</text>
</comment>
<comment type="similarity">
    <text evidence="5">Belongs to the phytochrome family.</text>
</comment>
<dbReference type="EMBL" id="U60264">
    <property type="protein sequence ID" value="AAB03339.1"/>
    <property type="molecule type" value="mRNA"/>
</dbReference>
<dbReference type="PIR" id="T14842">
    <property type="entry name" value="T14842"/>
</dbReference>
<dbReference type="SMR" id="Q40762"/>
<dbReference type="GO" id="GO:0000155">
    <property type="term" value="F:phosphorelay sensor kinase activity"/>
    <property type="evidence" value="ECO:0007669"/>
    <property type="project" value="InterPro"/>
</dbReference>
<dbReference type="GO" id="GO:0009881">
    <property type="term" value="F:photoreceptor activity"/>
    <property type="evidence" value="ECO:0007669"/>
    <property type="project" value="UniProtKB-KW"/>
</dbReference>
<dbReference type="GO" id="GO:0042803">
    <property type="term" value="F:protein homodimerization activity"/>
    <property type="evidence" value="ECO:0007669"/>
    <property type="project" value="InterPro"/>
</dbReference>
<dbReference type="GO" id="GO:0009584">
    <property type="term" value="P:detection of visible light"/>
    <property type="evidence" value="ECO:0007669"/>
    <property type="project" value="InterPro"/>
</dbReference>
<dbReference type="GO" id="GO:0009585">
    <property type="term" value="P:red, far-red light phototransduction"/>
    <property type="evidence" value="ECO:0007669"/>
    <property type="project" value="InterPro"/>
</dbReference>
<dbReference type="GO" id="GO:0006355">
    <property type="term" value="P:regulation of DNA-templated transcription"/>
    <property type="evidence" value="ECO:0007669"/>
    <property type="project" value="InterPro"/>
</dbReference>
<dbReference type="CDD" id="cd16932">
    <property type="entry name" value="HATPase_Phy-like"/>
    <property type="match status" value="1"/>
</dbReference>
<dbReference type="CDD" id="cd00082">
    <property type="entry name" value="HisKA"/>
    <property type="match status" value="1"/>
</dbReference>
<dbReference type="CDD" id="cd00130">
    <property type="entry name" value="PAS"/>
    <property type="match status" value="2"/>
</dbReference>
<dbReference type="FunFam" id="3.30.450.20:FF:000034">
    <property type="entry name" value="Phytochrome"/>
    <property type="match status" value="1"/>
</dbReference>
<dbReference type="FunFam" id="3.30.450.20:FF:000039">
    <property type="entry name" value="Phytochrome"/>
    <property type="match status" value="1"/>
</dbReference>
<dbReference type="FunFam" id="3.30.450.270:FF:000001">
    <property type="entry name" value="Phytochrome"/>
    <property type="match status" value="1"/>
</dbReference>
<dbReference type="Gene3D" id="1.10.287.130">
    <property type="match status" value="1"/>
</dbReference>
<dbReference type="Gene3D" id="3.30.450.270">
    <property type="match status" value="1"/>
</dbReference>
<dbReference type="Gene3D" id="3.30.450.40">
    <property type="match status" value="1"/>
</dbReference>
<dbReference type="Gene3D" id="3.30.565.10">
    <property type="entry name" value="Histidine kinase-like ATPase, C-terminal domain"/>
    <property type="match status" value="1"/>
</dbReference>
<dbReference type="Gene3D" id="3.30.450.20">
    <property type="entry name" value="PAS domain"/>
    <property type="match status" value="3"/>
</dbReference>
<dbReference type="InterPro" id="IPR003018">
    <property type="entry name" value="GAF"/>
</dbReference>
<dbReference type="InterPro" id="IPR029016">
    <property type="entry name" value="GAF-like_dom_sf"/>
</dbReference>
<dbReference type="InterPro" id="IPR036890">
    <property type="entry name" value="HATPase_C_sf"/>
</dbReference>
<dbReference type="InterPro" id="IPR005467">
    <property type="entry name" value="His_kinase_dom"/>
</dbReference>
<dbReference type="InterPro" id="IPR003661">
    <property type="entry name" value="HisK_dim/P_dom"/>
</dbReference>
<dbReference type="InterPro" id="IPR000014">
    <property type="entry name" value="PAS"/>
</dbReference>
<dbReference type="InterPro" id="IPR035965">
    <property type="entry name" value="PAS-like_dom_sf"/>
</dbReference>
<dbReference type="InterPro" id="IPR013654">
    <property type="entry name" value="PAS_2"/>
</dbReference>
<dbReference type="InterPro" id="IPR013767">
    <property type="entry name" value="PAS_fold"/>
</dbReference>
<dbReference type="InterPro" id="IPR044767">
    <property type="entry name" value="Phy_HATPase-like"/>
</dbReference>
<dbReference type="InterPro" id="IPR016132">
    <property type="entry name" value="Phyto_chromo_attachment"/>
</dbReference>
<dbReference type="InterPro" id="IPR013516">
    <property type="entry name" value="Phyto_chromo_BS"/>
</dbReference>
<dbReference type="InterPro" id="IPR001294">
    <property type="entry name" value="Phytochrome"/>
</dbReference>
<dbReference type="InterPro" id="IPR012129">
    <property type="entry name" value="Phytochrome_A-E"/>
</dbReference>
<dbReference type="InterPro" id="IPR013515">
    <property type="entry name" value="Phytochrome_cen-reg"/>
</dbReference>
<dbReference type="InterPro" id="IPR043150">
    <property type="entry name" value="Phytochrome_PHY_sf"/>
</dbReference>
<dbReference type="NCBIfam" id="TIGR00229">
    <property type="entry name" value="sensory_box"/>
    <property type="match status" value="2"/>
</dbReference>
<dbReference type="PANTHER" id="PTHR47876">
    <property type="entry name" value="OS08G0260000 PROTEIN"/>
    <property type="match status" value="1"/>
</dbReference>
<dbReference type="PANTHER" id="PTHR47876:SF3">
    <property type="entry name" value="PHYTOCHROME 1"/>
    <property type="match status" value="1"/>
</dbReference>
<dbReference type="Pfam" id="PF01590">
    <property type="entry name" value="GAF"/>
    <property type="match status" value="1"/>
</dbReference>
<dbReference type="Pfam" id="PF02518">
    <property type="entry name" value="HATPase_c"/>
    <property type="match status" value="1"/>
</dbReference>
<dbReference type="Pfam" id="PF00512">
    <property type="entry name" value="HisKA"/>
    <property type="match status" value="1"/>
</dbReference>
<dbReference type="Pfam" id="PF00989">
    <property type="entry name" value="PAS"/>
    <property type="match status" value="2"/>
</dbReference>
<dbReference type="Pfam" id="PF08446">
    <property type="entry name" value="PAS_2"/>
    <property type="match status" value="1"/>
</dbReference>
<dbReference type="Pfam" id="PF00360">
    <property type="entry name" value="PHY"/>
    <property type="match status" value="1"/>
</dbReference>
<dbReference type="PIRSF" id="PIRSF000084">
    <property type="entry name" value="Phytochrome"/>
    <property type="match status" value="1"/>
</dbReference>
<dbReference type="PRINTS" id="PR01033">
    <property type="entry name" value="PHYTOCHROME"/>
</dbReference>
<dbReference type="SMART" id="SM00065">
    <property type="entry name" value="GAF"/>
    <property type="match status" value="1"/>
</dbReference>
<dbReference type="SMART" id="SM00387">
    <property type="entry name" value="HATPase_c"/>
    <property type="match status" value="1"/>
</dbReference>
<dbReference type="SMART" id="SM00388">
    <property type="entry name" value="HisKA"/>
    <property type="match status" value="1"/>
</dbReference>
<dbReference type="SMART" id="SM00091">
    <property type="entry name" value="PAS"/>
    <property type="match status" value="2"/>
</dbReference>
<dbReference type="SUPFAM" id="SSF55874">
    <property type="entry name" value="ATPase domain of HSP90 chaperone/DNA topoisomerase II/histidine kinase"/>
    <property type="match status" value="1"/>
</dbReference>
<dbReference type="SUPFAM" id="SSF55781">
    <property type="entry name" value="GAF domain-like"/>
    <property type="match status" value="2"/>
</dbReference>
<dbReference type="SUPFAM" id="SSF55785">
    <property type="entry name" value="PYP-like sensor domain (PAS domain)"/>
    <property type="match status" value="3"/>
</dbReference>
<dbReference type="PROSITE" id="PS50109">
    <property type="entry name" value="HIS_KIN"/>
    <property type="match status" value="1"/>
</dbReference>
<dbReference type="PROSITE" id="PS50112">
    <property type="entry name" value="PAS"/>
    <property type="match status" value="2"/>
</dbReference>
<dbReference type="PROSITE" id="PS00245">
    <property type="entry name" value="PHYTOCHROME_1"/>
    <property type="match status" value="1"/>
</dbReference>
<dbReference type="PROSITE" id="PS50046">
    <property type="entry name" value="PHYTOCHROME_2"/>
    <property type="match status" value="1"/>
</dbReference>
<reference key="1">
    <citation type="journal article" date="1999" name="Plant Mol. Biol.">
        <title>Phytochrome types in Picea and Pinus. Expression patterns of PHYA-Related types.</title>
        <authorList>
            <person name="Clapham D.H."/>
            <person name="Kolukisaoglu H.U."/>
            <person name="Larsson C.T."/>
            <person name="Qamaruddin M."/>
            <person name="Ekberg I."/>
            <person name="Wiegmann-Eirund C."/>
            <person name="Schneider-Poetsch H.A."/>
            <person name="von Arnold S."/>
        </authorList>
    </citation>
    <scope>NUCLEOTIDE SEQUENCE [MRNA]</scope>
</reference>
<accession>Q40762</accession>
<feature type="chain" id="PRO_0000171983" description="Phytochrome">
    <location>
        <begin position="1"/>
        <end position="1136"/>
    </location>
</feature>
<feature type="domain" description="GAF">
    <location>
        <begin position="231"/>
        <end position="414"/>
    </location>
</feature>
<feature type="domain" description="PAS 1" evidence="3">
    <location>
        <begin position="629"/>
        <end position="699"/>
    </location>
</feature>
<feature type="domain" description="PAS 2" evidence="3">
    <location>
        <begin position="762"/>
        <end position="833"/>
    </location>
</feature>
<feature type="domain" description="Histidine kinase" evidence="2">
    <location>
        <begin position="913"/>
        <end position="1132"/>
    </location>
</feature>
<feature type="region of interest" description="Disordered" evidence="4">
    <location>
        <begin position="1"/>
        <end position="28"/>
    </location>
</feature>
<feature type="compositionally biased region" description="Low complexity" evidence="4">
    <location>
        <begin position="11"/>
        <end position="20"/>
    </location>
</feature>
<feature type="binding site" description="covalent" evidence="1">
    <location>
        <position position="336"/>
    </location>
    <ligand>
        <name>phytochromobilin</name>
        <dbReference type="ChEBI" id="CHEBI:189064"/>
    </ligand>
</feature>
<keyword id="KW-0157">Chromophore</keyword>
<keyword id="KW-0600">Photoreceptor protein</keyword>
<keyword id="KW-0675">Receptor</keyword>
<keyword id="KW-0677">Repeat</keyword>
<keyword id="KW-0716">Sensory transduction</keyword>
<keyword id="KW-0804">Transcription</keyword>
<keyword id="KW-0805">Transcription regulation</keyword>
<protein>
    <recommendedName>
        <fullName>Phytochrome</fullName>
    </recommendedName>
</protein>
<evidence type="ECO:0000250" key="1"/>
<evidence type="ECO:0000255" key="2">
    <source>
        <dbReference type="PROSITE-ProRule" id="PRU00107"/>
    </source>
</evidence>
<evidence type="ECO:0000255" key="3">
    <source>
        <dbReference type="PROSITE-ProRule" id="PRU00140"/>
    </source>
</evidence>
<evidence type="ECO:0000256" key="4">
    <source>
        <dbReference type="SAM" id="MobiDB-lite"/>
    </source>
</evidence>
<evidence type="ECO:0000305" key="5"/>
<sequence length="1136" mass="126066">MSTTRPRAATHSASSGSVSRSSKHSARVITQTPVDAKLQAEFEGSVHSFDYTKSIDISGDSSSVPSETVKAYLQRLQKEMLIQPFGCVLAVEEGSCAVVGYSENAPEMLDVVGGAHAVPSIGGQQQEGGGGGGGLLRIGMDARTLFKPASAAALQKAATFADMHLVNPIFVRCNRSGKPFYAILNRIDAGLVIDFEPVMPSDVPVSAAGALQSYKLAAKAISRLQSLPGGDIRLLCDTVVQEVRELTGYDRVMAYRFHEDEHGEVVAEMRRPDLEPYLGLHYPATDIPQASRFLFMKNRVRMICDCCAPPVNVIQDKRLRQPLSLCGSTLRAPHGCHAQYMANMGSIASLVMSVTTNENGDDSEGGGQQQPQNRRKLWGLVVCHHTSPRVIPFPLRYACEFLMQVFGIQLNKEVELAAQLREKHILRVQPVLCDMLLRDAPVGIVSQTPNIMDLVKCDGAALLYGKRLWLLGTTPTEAQILDIADWLLEHHRDSTGLSTDSLAEAGYPGAASLGDAVCGIAAARITSKDFLFWFRSHTAKEIIWGGAKHDPNDKDDGRRMHPRSSFKAFLEVVKRRSLPWEDVEMDAIHSLQLILRDSFHDIDDSDSKTMIHARLNDLRLQGIDELSAVTNEMVRLIETATVPILAIDSNGLVNGWNTKAAELTGLLADEVIGRPLIDLVQHDSVEIVKKMLYLALQGEEEQNVEIKLKTFGIQEEKGPVVLIVNACSSRDLEENVVGVCFVAQDVTWQRIAMDKFTHLQGDYRAIVQNPNPLIPPIFGADEYGYCSEWNPAMEKLTGWKREEVIGKMLVGEVFGIHRMSCQLKGQDGLTKLRIVLNNAMAGKETEKFPFSFFDRHGKNTEALLSANKRTDAEGIITGVFCFLHVTSTELQQALQVQRMAEQAAMDRLKELAYIRQEIRNPLYGIIFTRKLMESTDLSEEQKQIVQTSALCQRQLVKVLDDADLESIEDGYLELDTIEFTLGTVLDAVVSQGMILSREKGLQLIRDSPEEIKTMCLYGDQLRLQQILSNFLINALRFSTSEGWVGNKVVPTKRHLGSGVNVMHMEFRITHSGQGIPEELIKEMFVHNQDMFQEGLGLYMCQQLVKIMNGDVQYLREAGRSSFIINVEFPLAQTDKQ</sequence>
<organism>
    <name type="scientific">Picea abies</name>
    <name type="common">Norway spruce</name>
    <name type="synonym">Picea excelsa</name>
    <dbReference type="NCBI Taxonomy" id="3329"/>
    <lineage>
        <taxon>Eukaryota</taxon>
        <taxon>Viridiplantae</taxon>
        <taxon>Streptophyta</taxon>
        <taxon>Embryophyta</taxon>
        <taxon>Tracheophyta</taxon>
        <taxon>Spermatophyta</taxon>
        <taxon>Pinopsida</taxon>
        <taxon>Pinidae</taxon>
        <taxon>Conifers I</taxon>
        <taxon>Pinales</taxon>
        <taxon>Pinaceae</taxon>
        <taxon>Picea</taxon>
    </lineage>
</organism>